<proteinExistence type="evidence at protein level"/>
<comment type="function">
    <text evidence="1">Mediates visceral muscle contractile activity (myotropic activity).</text>
</comment>
<comment type="subcellular location">
    <subcellularLocation>
        <location>Secreted</location>
    </subcellularLocation>
</comment>
<comment type="tissue specificity">
    <text evidence="3">Dorsal ganglionic sheath of fused ventral nerve cord.</text>
</comment>
<comment type="mass spectrometry" mass="1515.8" method="MALDI" evidence="3"/>
<comment type="similarity">
    <text evidence="2">Belongs to the pyrokinin family.</text>
</comment>
<feature type="peptide" id="PRO_0000044367" description="Pyrokinin">
    <location>
        <begin position="1"/>
        <end position="15"/>
    </location>
</feature>
<feature type="modified residue" description="Leucine amide" evidence="3">
    <location>
        <position position="15"/>
    </location>
</feature>
<feature type="unsure residue" description="L or I" evidence="3">
    <location>
        <position position="15"/>
    </location>
</feature>
<accession>P84357</accession>
<organism>
    <name type="scientific">Musca domestica</name>
    <name type="common">House fly</name>
    <dbReference type="NCBI Taxonomy" id="7370"/>
    <lineage>
        <taxon>Eukaryota</taxon>
        <taxon>Metazoa</taxon>
        <taxon>Ecdysozoa</taxon>
        <taxon>Arthropoda</taxon>
        <taxon>Hexapoda</taxon>
        <taxon>Insecta</taxon>
        <taxon>Pterygota</taxon>
        <taxon>Neoptera</taxon>
        <taxon>Endopterygota</taxon>
        <taxon>Diptera</taxon>
        <taxon>Brachycera</taxon>
        <taxon>Muscomorpha</taxon>
        <taxon>Muscoidea</taxon>
        <taxon>Muscidae</taxon>
        <taxon>Musca</taxon>
    </lineage>
</organism>
<dbReference type="eggNOG" id="ENOG502TAG0">
    <property type="taxonomic scope" value="Eukaryota"/>
</dbReference>
<dbReference type="Proteomes" id="UP000694905">
    <property type="component" value="Unplaced"/>
</dbReference>
<dbReference type="GO" id="GO:0005576">
    <property type="term" value="C:extracellular region"/>
    <property type="evidence" value="ECO:0007669"/>
    <property type="project" value="UniProtKB-SubCell"/>
</dbReference>
<dbReference type="GO" id="GO:0005184">
    <property type="term" value="F:neuropeptide hormone activity"/>
    <property type="evidence" value="ECO:0007669"/>
    <property type="project" value="InterPro"/>
</dbReference>
<dbReference type="GO" id="GO:0007218">
    <property type="term" value="P:neuropeptide signaling pathway"/>
    <property type="evidence" value="ECO:0007669"/>
    <property type="project" value="UniProtKB-KW"/>
</dbReference>
<dbReference type="InterPro" id="IPR001484">
    <property type="entry name" value="Pyrokinin_CS"/>
</dbReference>
<dbReference type="PROSITE" id="PS00539">
    <property type="entry name" value="PYROKININ"/>
    <property type="match status" value="1"/>
</dbReference>
<protein>
    <recommendedName>
        <fullName>Pyrokinin</fullName>
        <shortName>Musdo-PK</shortName>
    </recommendedName>
    <alternativeName>
        <fullName>FXPRL-amide</fullName>
    </alternativeName>
</protein>
<keyword id="KW-0027">Amidation</keyword>
<keyword id="KW-0903">Direct protein sequencing</keyword>
<keyword id="KW-0527">Neuropeptide</keyword>
<keyword id="KW-1185">Reference proteome</keyword>
<keyword id="KW-0964">Secreted</keyword>
<reference evidence="4" key="1">
    <citation type="journal article" date="2003" name="Peptides">
        <title>Mass spectrometric analysis of putative capa-gene products in Musca domestica and Neobellieria bullata.</title>
        <authorList>
            <person name="Predel R."/>
            <person name="Russell W.K."/>
            <person name="Tichy S.E."/>
            <person name="Russell D.H."/>
            <person name="Nachman R.J."/>
        </authorList>
    </citation>
    <scope>PROTEIN SEQUENCE</scope>
    <scope>TISSUE SPECIFICITY</scope>
    <scope>MASS SPECTROMETRY</scope>
    <scope>AMIDATION AT LEU-15</scope>
    <source>
        <tissue evidence="3">Ganglion</tissue>
    </source>
</reference>
<sequence length="15" mass="1517">AGPSATTGVWFGPRL</sequence>
<name>PPK_MUSDO</name>
<evidence type="ECO:0000250" key="1">
    <source>
        <dbReference type="UniProtKB" id="P82617"/>
    </source>
</evidence>
<evidence type="ECO:0000255" key="2"/>
<evidence type="ECO:0000269" key="3">
    <source>
    </source>
</evidence>
<evidence type="ECO:0000305" key="4"/>